<evidence type="ECO:0000305" key="1"/>
<gene>
    <name type="primary">fixC</name>
</gene>
<dbReference type="EMBL" id="X65515">
    <property type="protein sequence ID" value="CAA46490.1"/>
    <property type="molecule type" value="Genomic_DNA"/>
</dbReference>
<dbReference type="PIR" id="S49189">
    <property type="entry name" value="S49189"/>
</dbReference>
<dbReference type="SMR" id="P53572"/>
<dbReference type="BioCyc" id="MetaCyc:MONOMER-21375"/>
<dbReference type="GO" id="GO:0016491">
    <property type="term" value="F:oxidoreductase activity"/>
    <property type="evidence" value="ECO:0007669"/>
    <property type="project" value="UniProtKB-KW"/>
</dbReference>
<dbReference type="GO" id="GO:0009399">
    <property type="term" value="P:nitrogen fixation"/>
    <property type="evidence" value="ECO:0007669"/>
    <property type="project" value="UniProtKB-KW"/>
</dbReference>
<dbReference type="Gene3D" id="3.50.50.60">
    <property type="entry name" value="FAD/NAD(P)-binding domain"/>
    <property type="match status" value="1"/>
</dbReference>
<dbReference type="InterPro" id="IPR049398">
    <property type="entry name" value="ETF-QO/FixC_UQ-bd"/>
</dbReference>
<dbReference type="InterPro" id="IPR036188">
    <property type="entry name" value="FAD/NAD-bd_sf"/>
</dbReference>
<dbReference type="InterPro" id="IPR023753">
    <property type="entry name" value="FAD/NAD-binding_dom"/>
</dbReference>
<dbReference type="InterPro" id="IPR039651">
    <property type="entry name" value="FixC-like"/>
</dbReference>
<dbReference type="PANTHER" id="PTHR43624">
    <property type="entry name" value="ELECTRON TRANSFER FLAVOPROTEIN-QUINONE OXIDOREDUCTASE YDIS-RELATED"/>
    <property type="match status" value="1"/>
</dbReference>
<dbReference type="PANTHER" id="PTHR43624:SF2">
    <property type="entry name" value="ELECTRON TRANSFER FLAVOPROTEIN-QUINONE OXIDOREDUCTASE YDIS-RELATED"/>
    <property type="match status" value="1"/>
</dbReference>
<dbReference type="Pfam" id="PF21162">
    <property type="entry name" value="ETFQO_UQ-bd"/>
    <property type="match status" value="1"/>
</dbReference>
<dbReference type="Pfam" id="PF07992">
    <property type="entry name" value="Pyr_redox_2"/>
    <property type="match status" value="1"/>
</dbReference>
<dbReference type="PRINTS" id="PR00420">
    <property type="entry name" value="RNGMNOXGNASE"/>
</dbReference>
<dbReference type="SUPFAM" id="SSF54373">
    <property type="entry name" value="FAD-linked reductases, C-terminal domain"/>
    <property type="match status" value="1"/>
</dbReference>
<dbReference type="SUPFAM" id="SSF51905">
    <property type="entry name" value="FAD/NAD(P)-binding domain"/>
    <property type="match status" value="1"/>
</dbReference>
<protein>
    <recommendedName>
        <fullName>Protein FixC</fullName>
    </recommendedName>
</protein>
<organism>
    <name type="scientific">Azotobacter vinelandii</name>
    <dbReference type="NCBI Taxonomy" id="354"/>
    <lineage>
        <taxon>Bacteria</taxon>
        <taxon>Pseudomonadati</taxon>
        <taxon>Pseudomonadota</taxon>
        <taxon>Gammaproteobacteria</taxon>
        <taxon>Pseudomonadales</taxon>
        <taxon>Pseudomonadaceae</taxon>
        <taxon>Azotobacter</taxon>
    </lineage>
</organism>
<sequence length="427" mass="47731">MAERFDVIVVGAGMAGNAAAYTLAKGGLKVLQIERGETPGSKNVQGAILYADAIEKIIPDFRDDAPLERHLIEQRVWVMDDASYGYHYRSEDFNKPPYNRYTIIRVHFDQWFNKKAREAGVLTICETRHDLLIEGGKVVGVRTDRQGGEVRADAVILADGVNSRLAVKAGFSRDQPENWALAVKEIHFLPQETMEARFNIGEEEAAIEMAGKIDAGMMGTGFLYTNKESITLGVGCMLSDFKQQKISPYELLDRMKTHPSIAPLIAGSDMKEYAAHLIPEGGYNAIPQVYGDGWMIAGDAPIRHGIHREGSNLAMTTGMLAAQTLVELRAADKPFSAANLAEYKKKLDDSFVMKDLKKYRRMPEIFHKNKQFFTTYPDLLSRAAQTLIRVDGVDKKTKEKEIKKSFIGLRSLFGLIGDAFKFWRAVE</sequence>
<comment type="function">
    <text>Could be required for the formation of a functional nitrogenase Fe protein. Probably accepts electrons from FixA/FixB and reduces a quinone.</text>
</comment>
<comment type="cofactor">
    <cofactor evidence="1">
        <name>FAD</name>
        <dbReference type="ChEBI" id="CHEBI:57692"/>
    </cofactor>
</comment>
<comment type="similarity">
    <text evidence="1">Belongs to the ETF-QO/FixC family.</text>
</comment>
<proteinExistence type="inferred from homology"/>
<name>FIXC_AZOVI</name>
<accession>P53572</accession>
<reference key="1">
    <citation type="submission" date="1994-07" db="EMBL/GenBank/DDBJ databases">
        <authorList>
            <person name="Wientjens R."/>
            <person name="van Dongen W."/>
            <person name="Haaker H."/>
        </authorList>
    </citation>
    <scope>NUCLEOTIDE SEQUENCE [GENOMIC DNA]</scope>
    <source>
        <strain>ATCC 478 / DSM 2289 / BCRC 14361 / JCM 21475 / KCTC 12137 / NBRC 102612 / NCIMB 12096 / NRRL B-14641 / VKM B-1617 / NRS 16</strain>
    </source>
</reference>
<feature type="chain" id="PRO_0000200685" description="Protein FixC">
    <location>
        <begin position="1"/>
        <end position="427"/>
    </location>
</feature>
<keyword id="KW-0274">FAD</keyword>
<keyword id="KW-0285">Flavoprotein</keyword>
<keyword id="KW-0535">Nitrogen fixation</keyword>
<keyword id="KW-0560">Oxidoreductase</keyword>